<keyword id="KW-0001">2Fe-2S</keyword>
<keyword id="KW-0072">Autophagy</keyword>
<keyword id="KW-0256">Endoplasmic reticulum</keyword>
<keyword id="KW-0408">Iron</keyword>
<keyword id="KW-0411">Iron-sulfur</keyword>
<keyword id="KW-0472">Membrane</keyword>
<keyword id="KW-0479">Metal-binding</keyword>
<keyword id="KW-0496">Mitochondrion</keyword>
<keyword id="KW-1000">Mitochondrion outer membrane</keyword>
<keyword id="KW-1185">Reference proteome</keyword>
<keyword id="KW-0812">Transmembrane</keyword>
<keyword id="KW-1133">Transmembrane helix</keyword>
<evidence type="ECO:0000250" key="1"/>
<evidence type="ECO:0000255" key="2"/>
<evidence type="ECO:0000305" key="3"/>
<organism>
    <name type="scientific">Salmo salar</name>
    <name type="common">Atlantic salmon</name>
    <dbReference type="NCBI Taxonomy" id="8030"/>
    <lineage>
        <taxon>Eukaryota</taxon>
        <taxon>Metazoa</taxon>
        <taxon>Chordata</taxon>
        <taxon>Craniata</taxon>
        <taxon>Vertebrata</taxon>
        <taxon>Euteleostomi</taxon>
        <taxon>Actinopterygii</taxon>
        <taxon>Neopterygii</taxon>
        <taxon>Teleostei</taxon>
        <taxon>Protacanthopterygii</taxon>
        <taxon>Salmoniformes</taxon>
        <taxon>Salmonidae</taxon>
        <taxon>Salmoninae</taxon>
        <taxon>Salmo</taxon>
    </lineage>
</organism>
<proteinExistence type="evidence at transcript level"/>
<dbReference type="EMBL" id="BT047441">
    <property type="protein sequence ID" value="ACI67242.1"/>
    <property type="molecule type" value="mRNA"/>
</dbReference>
<dbReference type="RefSeq" id="NP_001134369.1">
    <property type="nucleotide sequence ID" value="NM_001140897.1"/>
</dbReference>
<dbReference type="SMR" id="B5X8S2"/>
<dbReference type="STRING" id="8030.ENSSSAP00000017072"/>
<dbReference type="PaxDb" id="8030-ENSSSAP00000017072"/>
<dbReference type="Ensembl" id="ENSSSAT00020032295">
    <property type="protein sequence ID" value="ENSSSAP00020029880"/>
    <property type="gene ID" value="ENSSSAG00020011400"/>
</dbReference>
<dbReference type="Ensembl" id="ENSSSAT00070007495">
    <property type="protein sequence ID" value="ENSSSAP00070007022"/>
    <property type="gene ID" value="ENSSSAG00070004967"/>
</dbReference>
<dbReference type="GeneID" id="100195868"/>
<dbReference type="KEGG" id="sasa:100195868"/>
<dbReference type="CTD" id="493856"/>
<dbReference type="OrthoDB" id="341206at7898"/>
<dbReference type="Proteomes" id="UP000087266">
    <property type="component" value="Chromosome ssa08"/>
</dbReference>
<dbReference type="Bgee" id="ENSSSAG00000008170">
    <property type="expression patterns" value="Expressed in camera-type eye and 22 other cell types or tissues"/>
</dbReference>
<dbReference type="GO" id="GO:0005789">
    <property type="term" value="C:endoplasmic reticulum membrane"/>
    <property type="evidence" value="ECO:0000250"/>
    <property type="project" value="UniProtKB"/>
</dbReference>
<dbReference type="GO" id="GO:0005741">
    <property type="term" value="C:mitochondrial outer membrane"/>
    <property type="evidence" value="ECO:0000250"/>
    <property type="project" value="UniProtKB"/>
</dbReference>
<dbReference type="GO" id="GO:0051537">
    <property type="term" value="F:2 iron, 2 sulfur cluster binding"/>
    <property type="evidence" value="ECO:0000250"/>
    <property type="project" value="UniProtKB"/>
</dbReference>
<dbReference type="GO" id="GO:0046872">
    <property type="term" value="F:metal ion binding"/>
    <property type="evidence" value="ECO:0007669"/>
    <property type="project" value="UniProtKB-KW"/>
</dbReference>
<dbReference type="GO" id="GO:0042803">
    <property type="term" value="F:protein homodimerization activity"/>
    <property type="evidence" value="ECO:0000250"/>
    <property type="project" value="UniProtKB"/>
</dbReference>
<dbReference type="GO" id="GO:0000422">
    <property type="term" value="P:autophagy of mitochondrion"/>
    <property type="evidence" value="ECO:0000250"/>
    <property type="project" value="UniProtKB"/>
</dbReference>
<dbReference type="GO" id="GO:0010506">
    <property type="term" value="P:regulation of autophagy"/>
    <property type="evidence" value="ECO:0000250"/>
    <property type="project" value="UniProtKB"/>
</dbReference>
<dbReference type="FunFam" id="3.40.5.90:FF:000001">
    <property type="entry name" value="CDGSH iron-sulfur domain-containing protein 1"/>
    <property type="match status" value="1"/>
</dbReference>
<dbReference type="Gene3D" id="3.40.5.90">
    <property type="entry name" value="CDGSH iron-sulfur domain, mitoNEET-type"/>
    <property type="match status" value="1"/>
</dbReference>
<dbReference type="InterPro" id="IPR045131">
    <property type="entry name" value="CISD1/2"/>
</dbReference>
<dbReference type="InterPro" id="IPR018967">
    <property type="entry name" value="FeS-contain_CDGSH-typ"/>
</dbReference>
<dbReference type="InterPro" id="IPR019610">
    <property type="entry name" value="FeS-contain_mitoNEET_N"/>
</dbReference>
<dbReference type="InterPro" id="IPR042216">
    <property type="entry name" value="MitoNEET_CISD"/>
</dbReference>
<dbReference type="PANTHER" id="PTHR13680">
    <property type="entry name" value="CDGSH IRON-SULFUR DOMAIN-CONTAINING PROTEIN 1"/>
    <property type="match status" value="1"/>
</dbReference>
<dbReference type="PANTHER" id="PTHR13680:SF33">
    <property type="entry name" value="CDGSH IRON-SULFUR DOMAIN-CONTAINING PROTEIN 2"/>
    <property type="match status" value="1"/>
</dbReference>
<dbReference type="Pfam" id="PF10660">
    <property type="entry name" value="MitoNEET_N"/>
    <property type="match status" value="1"/>
</dbReference>
<dbReference type="Pfam" id="PF09360">
    <property type="entry name" value="zf-CDGSH"/>
    <property type="match status" value="1"/>
</dbReference>
<dbReference type="SMART" id="SM00704">
    <property type="entry name" value="ZnF_CDGSH"/>
    <property type="match status" value="1"/>
</dbReference>
<protein>
    <recommendedName>
        <fullName>CDGSH iron-sulfur domain-containing protein 2B</fullName>
    </recommendedName>
</protein>
<feature type="chain" id="PRO_0000392020" description="CDGSH iron-sulfur domain-containing protein 2B">
    <location>
        <begin position="1"/>
        <end position="135"/>
    </location>
</feature>
<feature type="topological domain" description="Lumenal" evidence="2">
    <location>
        <begin position="1"/>
        <end position="37"/>
    </location>
</feature>
<feature type="transmembrane region" description="Helical" evidence="2">
    <location>
        <begin position="38"/>
        <end position="60"/>
    </location>
</feature>
<feature type="topological domain" description="Cytoplasmic" evidence="2">
    <location>
        <begin position="61"/>
        <end position="135"/>
    </location>
</feature>
<feature type="binding site" evidence="1">
    <location>
        <position position="99"/>
    </location>
    <ligand>
        <name>[2Fe-2S] cluster</name>
        <dbReference type="ChEBI" id="CHEBI:190135"/>
    </ligand>
</feature>
<feature type="binding site" evidence="1">
    <location>
        <position position="101"/>
    </location>
    <ligand>
        <name>[2Fe-2S] cluster</name>
        <dbReference type="ChEBI" id="CHEBI:190135"/>
    </ligand>
</feature>
<feature type="binding site" evidence="1">
    <location>
        <position position="110"/>
    </location>
    <ligand>
        <name>[2Fe-2S] cluster</name>
        <dbReference type="ChEBI" id="CHEBI:190135"/>
    </ligand>
</feature>
<feature type="binding site" evidence="1">
    <location>
        <position position="114"/>
    </location>
    <ligand>
        <name>[2Fe-2S] cluster</name>
        <dbReference type="ChEBI" id="CHEBI:190135"/>
    </ligand>
</feature>
<comment type="function">
    <text evidence="1">Regulator of autophagy that contributes to antagonize becn1-mediated cellular autophagy at the endoplasmic reticulum. Participates in the interaction of bcl2 with becn1 and is required for bcl2-mediated depression of endoplasmic reticulum Ca(2+) stores during autophagy (By similarity).</text>
</comment>
<comment type="cofactor">
    <cofactor evidence="1">
        <name>[2Fe-2S] cluster</name>
        <dbReference type="ChEBI" id="CHEBI:190135"/>
    </cofactor>
    <text evidence="1">Binds 1 [2Fe-2S] cluster.</text>
</comment>
<comment type="subunit">
    <text evidence="1">Homodimer.</text>
</comment>
<comment type="subcellular location">
    <subcellularLocation>
        <location evidence="1">Endoplasmic reticulum membrane</location>
        <topology evidence="1">Single-pass membrane protein</topology>
    </subcellularLocation>
    <subcellularLocation>
        <location evidence="1">Mitochondrion outer membrane</location>
        <topology evidence="1">Single-pass membrane protein</topology>
    </subcellularLocation>
</comment>
<comment type="similarity">
    <text evidence="3">Belongs to the CISD protein family. CISD2 subfamily.</text>
</comment>
<accession>B5X8S2</accession>
<gene>
    <name type="primary">cisd2b</name>
</gene>
<reference key="1">
    <citation type="journal article" date="2010" name="BMC Genomics">
        <title>Salmo salar and Esox lucius full-length cDNA sequences reveal changes in evolutionary pressures on a post-tetraploidization genome.</title>
        <authorList>
            <person name="Leong J.S."/>
            <person name="Jantzen S.G."/>
            <person name="von Schalburg K.R."/>
            <person name="Cooper G.A."/>
            <person name="Messmer A.M."/>
            <person name="Liao N.Y."/>
            <person name="Munro S."/>
            <person name="Moore R."/>
            <person name="Holt R.A."/>
            <person name="Jones S.J."/>
            <person name="Davidson W.S."/>
            <person name="Koop B.F."/>
        </authorList>
    </citation>
    <scope>NUCLEOTIDE SEQUENCE [LARGE SCALE MRNA]</scope>
    <source>
        <tissue>Thyroid</tissue>
    </source>
</reference>
<name>CID2B_SALSA</name>
<sequence length="135" mass="15479">MVLETISKIIKTQLPAYLKKFPLPETIGGFARLTVLDWLRLLPLLGILALLGYLTIRPFLPKKKKQKDSLINLKIQKENPKVVNEIDIEDLKSTNVCYCRCWRSKTFPVCDKSHIKHNELTGDNVGPLILKKKIL</sequence>